<organism>
    <name type="scientific">Roseiflexus castenholzii (strain DSM 13941 / HLO8)</name>
    <dbReference type="NCBI Taxonomy" id="383372"/>
    <lineage>
        <taxon>Bacteria</taxon>
        <taxon>Bacillati</taxon>
        <taxon>Chloroflexota</taxon>
        <taxon>Chloroflexia</taxon>
        <taxon>Chloroflexales</taxon>
        <taxon>Roseiflexineae</taxon>
        <taxon>Roseiflexaceae</taxon>
        <taxon>Roseiflexus</taxon>
    </lineage>
</organism>
<feature type="chain" id="PRO_0000337618" description="Enolase">
    <location>
        <begin position="1"/>
        <end position="429"/>
    </location>
</feature>
<feature type="active site" description="Proton donor" evidence="1">
    <location>
        <position position="207"/>
    </location>
</feature>
<feature type="active site" description="Proton acceptor" evidence="1">
    <location>
        <position position="339"/>
    </location>
</feature>
<feature type="binding site" evidence="1">
    <location>
        <position position="165"/>
    </location>
    <ligand>
        <name>(2R)-2-phosphoglycerate</name>
        <dbReference type="ChEBI" id="CHEBI:58289"/>
    </ligand>
</feature>
<feature type="binding site" evidence="1">
    <location>
        <position position="244"/>
    </location>
    <ligand>
        <name>Mg(2+)</name>
        <dbReference type="ChEBI" id="CHEBI:18420"/>
    </ligand>
</feature>
<feature type="binding site" evidence="1">
    <location>
        <position position="287"/>
    </location>
    <ligand>
        <name>Mg(2+)</name>
        <dbReference type="ChEBI" id="CHEBI:18420"/>
    </ligand>
</feature>
<feature type="binding site" evidence="1">
    <location>
        <position position="314"/>
    </location>
    <ligand>
        <name>Mg(2+)</name>
        <dbReference type="ChEBI" id="CHEBI:18420"/>
    </ligand>
</feature>
<feature type="binding site" evidence="1">
    <location>
        <position position="339"/>
    </location>
    <ligand>
        <name>(2R)-2-phosphoglycerate</name>
        <dbReference type="ChEBI" id="CHEBI:58289"/>
    </ligand>
</feature>
<feature type="binding site" evidence="1">
    <location>
        <position position="368"/>
    </location>
    <ligand>
        <name>(2R)-2-phosphoglycerate</name>
        <dbReference type="ChEBI" id="CHEBI:58289"/>
    </ligand>
</feature>
<feature type="binding site" evidence="1">
    <location>
        <position position="369"/>
    </location>
    <ligand>
        <name>(2R)-2-phosphoglycerate</name>
        <dbReference type="ChEBI" id="CHEBI:58289"/>
    </ligand>
</feature>
<feature type="binding site" evidence="1">
    <location>
        <position position="390"/>
    </location>
    <ligand>
        <name>(2R)-2-phosphoglycerate</name>
        <dbReference type="ChEBI" id="CHEBI:58289"/>
    </ligand>
</feature>
<dbReference type="EC" id="4.2.1.11" evidence="1"/>
<dbReference type="EMBL" id="CP000804">
    <property type="protein sequence ID" value="ABU56211.1"/>
    <property type="molecule type" value="Genomic_DNA"/>
</dbReference>
<dbReference type="RefSeq" id="WP_011997616.1">
    <property type="nucleotide sequence ID" value="NC_009767.1"/>
</dbReference>
<dbReference type="SMR" id="A7NFI9"/>
<dbReference type="STRING" id="383372.Rcas_0074"/>
<dbReference type="KEGG" id="rca:Rcas_0074"/>
<dbReference type="eggNOG" id="COG0148">
    <property type="taxonomic scope" value="Bacteria"/>
</dbReference>
<dbReference type="HOGENOM" id="CLU_031223_2_1_0"/>
<dbReference type="OrthoDB" id="9804716at2"/>
<dbReference type="UniPathway" id="UPA00109">
    <property type="reaction ID" value="UER00187"/>
</dbReference>
<dbReference type="Proteomes" id="UP000000263">
    <property type="component" value="Chromosome"/>
</dbReference>
<dbReference type="GO" id="GO:0009986">
    <property type="term" value="C:cell surface"/>
    <property type="evidence" value="ECO:0007669"/>
    <property type="project" value="UniProtKB-SubCell"/>
</dbReference>
<dbReference type="GO" id="GO:0005576">
    <property type="term" value="C:extracellular region"/>
    <property type="evidence" value="ECO:0007669"/>
    <property type="project" value="UniProtKB-SubCell"/>
</dbReference>
<dbReference type="GO" id="GO:0000015">
    <property type="term" value="C:phosphopyruvate hydratase complex"/>
    <property type="evidence" value="ECO:0007669"/>
    <property type="project" value="InterPro"/>
</dbReference>
<dbReference type="GO" id="GO:0000287">
    <property type="term" value="F:magnesium ion binding"/>
    <property type="evidence" value="ECO:0007669"/>
    <property type="project" value="UniProtKB-UniRule"/>
</dbReference>
<dbReference type="GO" id="GO:0004634">
    <property type="term" value="F:phosphopyruvate hydratase activity"/>
    <property type="evidence" value="ECO:0007669"/>
    <property type="project" value="UniProtKB-UniRule"/>
</dbReference>
<dbReference type="GO" id="GO:0006096">
    <property type="term" value="P:glycolytic process"/>
    <property type="evidence" value="ECO:0007669"/>
    <property type="project" value="UniProtKB-UniRule"/>
</dbReference>
<dbReference type="CDD" id="cd03313">
    <property type="entry name" value="enolase"/>
    <property type="match status" value="1"/>
</dbReference>
<dbReference type="FunFam" id="3.20.20.120:FF:000001">
    <property type="entry name" value="Enolase"/>
    <property type="match status" value="1"/>
</dbReference>
<dbReference type="FunFam" id="3.30.390.10:FF:000001">
    <property type="entry name" value="Enolase"/>
    <property type="match status" value="1"/>
</dbReference>
<dbReference type="Gene3D" id="3.20.20.120">
    <property type="entry name" value="Enolase-like C-terminal domain"/>
    <property type="match status" value="1"/>
</dbReference>
<dbReference type="Gene3D" id="3.30.390.10">
    <property type="entry name" value="Enolase-like, N-terminal domain"/>
    <property type="match status" value="1"/>
</dbReference>
<dbReference type="HAMAP" id="MF_00318">
    <property type="entry name" value="Enolase"/>
    <property type="match status" value="1"/>
</dbReference>
<dbReference type="InterPro" id="IPR000941">
    <property type="entry name" value="Enolase"/>
</dbReference>
<dbReference type="InterPro" id="IPR036849">
    <property type="entry name" value="Enolase-like_C_sf"/>
</dbReference>
<dbReference type="InterPro" id="IPR029017">
    <property type="entry name" value="Enolase-like_N"/>
</dbReference>
<dbReference type="InterPro" id="IPR020810">
    <property type="entry name" value="Enolase_C"/>
</dbReference>
<dbReference type="InterPro" id="IPR020809">
    <property type="entry name" value="Enolase_CS"/>
</dbReference>
<dbReference type="InterPro" id="IPR020811">
    <property type="entry name" value="Enolase_N"/>
</dbReference>
<dbReference type="NCBIfam" id="TIGR01060">
    <property type="entry name" value="eno"/>
    <property type="match status" value="1"/>
</dbReference>
<dbReference type="PANTHER" id="PTHR11902">
    <property type="entry name" value="ENOLASE"/>
    <property type="match status" value="1"/>
</dbReference>
<dbReference type="PANTHER" id="PTHR11902:SF1">
    <property type="entry name" value="ENOLASE"/>
    <property type="match status" value="1"/>
</dbReference>
<dbReference type="Pfam" id="PF00113">
    <property type="entry name" value="Enolase_C"/>
    <property type="match status" value="1"/>
</dbReference>
<dbReference type="Pfam" id="PF03952">
    <property type="entry name" value="Enolase_N"/>
    <property type="match status" value="1"/>
</dbReference>
<dbReference type="PIRSF" id="PIRSF001400">
    <property type="entry name" value="Enolase"/>
    <property type="match status" value="1"/>
</dbReference>
<dbReference type="PRINTS" id="PR00148">
    <property type="entry name" value="ENOLASE"/>
</dbReference>
<dbReference type="SFLD" id="SFLDS00001">
    <property type="entry name" value="Enolase"/>
    <property type="match status" value="1"/>
</dbReference>
<dbReference type="SFLD" id="SFLDF00002">
    <property type="entry name" value="enolase"/>
    <property type="match status" value="1"/>
</dbReference>
<dbReference type="SMART" id="SM01192">
    <property type="entry name" value="Enolase_C"/>
    <property type="match status" value="1"/>
</dbReference>
<dbReference type="SMART" id="SM01193">
    <property type="entry name" value="Enolase_N"/>
    <property type="match status" value="1"/>
</dbReference>
<dbReference type="SUPFAM" id="SSF51604">
    <property type="entry name" value="Enolase C-terminal domain-like"/>
    <property type="match status" value="1"/>
</dbReference>
<dbReference type="SUPFAM" id="SSF54826">
    <property type="entry name" value="Enolase N-terminal domain-like"/>
    <property type="match status" value="1"/>
</dbReference>
<dbReference type="PROSITE" id="PS00164">
    <property type="entry name" value="ENOLASE"/>
    <property type="match status" value="1"/>
</dbReference>
<name>ENO_ROSCS</name>
<comment type="function">
    <text evidence="1">Catalyzes the reversible conversion of 2-phosphoglycerate (2-PG) into phosphoenolpyruvate (PEP). It is essential for the degradation of carbohydrates via glycolysis.</text>
</comment>
<comment type="catalytic activity">
    <reaction evidence="1">
        <text>(2R)-2-phosphoglycerate = phosphoenolpyruvate + H2O</text>
        <dbReference type="Rhea" id="RHEA:10164"/>
        <dbReference type="ChEBI" id="CHEBI:15377"/>
        <dbReference type="ChEBI" id="CHEBI:58289"/>
        <dbReference type="ChEBI" id="CHEBI:58702"/>
        <dbReference type="EC" id="4.2.1.11"/>
    </reaction>
</comment>
<comment type="cofactor">
    <cofactor evidence="1">
        <name>Mg(2+)</name>
        <dbReference type="ChEBI" id="CHEBI:18420"/>
    </cofactor>
    <text evidence="1">Binds a second Mg(2+) ion via substrate during catalysis.</text>
</comment>
<comment type="pathway">
    <text evidence="1">Carbohydrate degradation; glycolysis; pyruvate from D-glyceraldehyde 3-phosphate: step 4/5.</text>
</comment>
<comment type="subcellular location">
    <subcellularLocation>
        <location evidence="1">Cytoplasm</location>
    </subcellularLocation>
    <subcellularLocation>
        <location evidence="1">Secreted</location>
    </subcellularLocation>
    <subcellularLocation>
        <location evidence="1">Cell surface</location>
    </subcellularLocation>
    <text evidence="1">Fractions of enolase are present in both the cytoplasm and on the cell surface.</text>
</comment>
<comment type="similarity">
    <text evidence="1">Belongs to the enolase family.</text>
</comment>
<sequence>MADTTIEAITAREVLDSRGNPTIEVDVYLESGDMGRAIVPSGASTGAFEALELRDGDKSRYGGKGVLKAVENVNTTIAEALEGEDAADQMRIDRMLIDLDGAENKGRLGANAILGVSLACAKAAAAAHGLPLYRYLGGIHAHVLPVPMMNILNGGKHAQNSTDFQEFMIMPVGAPSFREALRWGSEIYQSLKKVIHDRGGSTNVGDEGGFAPSLPTNEAALQIIVEAVERAGYQLGDQVMLAMDPACTELYKDGKYHLEREGRSLTSAEMVEYWADIAARYPLISLEDGLAEEDWEGWKLLRARLGDRIQLVGDDFLVTNVKRLARAISEQAANSILIKLNQIGTLTETLDAITMANRAGWTAVVSHRSGESEDVTIADLVVATNAGQIKTGAPARTDRVAKYNQLLRIEEELDSAAHYAGMGAFRVAR</sequence>
<proteinExistence type="inferred from homology"/>
<evidence type="ECO:0000255" key="1">
    <source>
        <dbReference type="HAMAP-Rule" id="MF_00318"/>
    </source>
</evidence>
<accession>A7NFI9</accession>
<keyword id="KW-0963">Cytoplasm</keyword>
<keyword id="KW-0324">Glycolysis</keyword>
<keyword id="KW-0456">Lyase</keyword>
<keyword id="KW-0460">Magnesium</keyword>
<keyword id="KW-0479">Metal-binding</keyword>
<keyword id="KW-1185">Reference proteome</keyword>
<keyword id="KW-0964">Secreted</keyword>
<gene>
    <name evidence="1" type="primary">eno</name>
    <name type="ordered locus">Rcas_0074</name>
</gene>
<reference key="1">
    <citation type="submission" date="2007-08" db="EMBL/GenBank/DDBJ databases">
        <title>Complete sequence of Roseiflexus castenholzii DSM 13941.</title>
        <authorList>
            <consortium name="US DOE Joint Genome Institute"/>
            <person name="Copeland A."/>
            <person name="Lucas S."/>
            <person name="Lapidus A."/>
            <person name="Barry K."/>
            <person name="Glavina del Rio T."/>
            <person name="Dalin E."/>
            <person name="Tice H."/>
            <person name="Pitluck S."/>
            <person name="Thompson L.S."/>
            <person name="Brettin T."/>
            <person name="Bruce D."/>
            <person name="Detter J.C."/>
            <person name="Han C."/>
            <person name="Tapia R."/>
            <person name="Schmutz J."/>
            <person name="Larimer F."/>
            <person name="Land M."/>
            <person name="Hauser L."/>
            <person name="Kyrpides N."/>
            <person name="Mikhailova N."/>
            <person name="Bryant D.A."/>
            <person name="Hanada S."/>
            <person name="Tsukatani Y."/>
            <person name="Richardson P."/>
        </authorList>
    </citation>
    <scope>NUCLEOTIDE SEQUENCE [LARGE SCALE GENOMIC DNA]</scope>
    <source>
        <strain>DSM 13941 / HLO8</strain>
    </source>
</reference>
<protein>
    <recommendedName>
        <fullName evidence="1">Enolase</fullName>
        <ecNumber evidence="1">4.2.1.11</ecNumber>
    </recommendedName>
    <alternativeName>
        <fullName evidence="1">2-phospho-D-glycerate hydro-lyase</fullName>
    </alternativeName>
    <alternativeName>
        <fullName evidence="1">2-phosphoglycerate dehydratase</fullName>
    </alternativeName>
</protein>